<sequence length="260" mass="28383">MGKKKMKLSSLFKGGAGGLLAVPLCYNAKTLSFRVGDDMIKTVNSVFFDHHHNNNNGGDLLEAETPESWFTNSSETASHSTESDQDLDAESLEMVVRGVVRSERLFFDPGVTSSILEEIEEKSKSDLKSKETVAVGEDRSTPIEEISVAVAMESEDPYGDFRRSMEEMVTSHGELAKDWESLESMLAWYLRMNGRKSHGVIVSAFVDLLSGLSDSGAGITSASVSDSARYSTAVSSLPSSPVYSLSQGQTEIQEEERRSC</sequence>
<organism>
    <name type="scientific">Arabidopsis thaliana</name>
    <name type="common">Mouse-ear cress</name>
    <dbReference type="NCBI Taxonomy" id="3702"/>
    <lineage>
        <taxon>Eukaryota</taxon>
        <taxon>Viridiplantae</taxon>
        <taxon>Streptophyta</taxon>
        <taxon>Embryophyta</taxon>
        <taxon>Tracheophyta</taxon>
        <taxon>Spermatophyta</taxon>
        <taxon>Magnoliopsida</taxon>
        <taxon>eudicotyledons</taxon>
        <taxon>Gunneridae</taxon>
        <taxon>Pentapetalae</taxon>
        <taxon>rosids</taxon>
        <taxon>malvids</taxon>
        <taxon>Brassicales</taxon>
        <taxon>Brassicaceae</taxon>
        <taxon>Camelineae</taxon>
        <taxon>Arabidopsis</taxon>
    </lineage>
</organism>
<evidence type="ECO:0000250" key="1"/>
<evidence type="ECO:0000255" key="2">
    <source>
        <dbReference type="PROSITE-ProRule" id="PRU01090"/>
    </source>
</evidence>
<evidence type="ECO:0000269" key="3">
    <source>
    </source>
</evidence>
<evidence type="ECO:0000305" key="4">
    <source>
    </source>
</evidence>
<protein>
    <recommendedName>
        <fullName>Transcription repressor OFP13</fullName>
    </recommendedName>
    <alternativeName>
        <fullName>Ovate family protein 13</fullName>
        <shortName>AtOFP13</shortName>
    </alternativeName>
</protein>
<proteinExistence type="evidence at protein level"/>
<comment type="function">
    <text evidence="3">Transcriptional repressor that regulates multiple aspects of plant growth and development through the regulation of BEL1-LIKE (BLH) and KNOX TALE (KNAT) homeodomain transcription factors.</text>
</comment>
<comment type="interaction">
    <interactant intactId="EBI-15204858">
        <id>Q9FMC8</id>
    </interactant>
    <interactant intactId="EBI-5567050">
        <id>O82503</id>
        <label>CRF1</label>
    </interactant>
    <organismsDiffer>false</organismsDiffer>
    <experiments>3</experiments>
</comment>
<comment type="interaction">
    <interactant intactId="EBI-15204858">
        <id>Q9FMC8</id>
    </interactant>
    <interactant intactId="EBI-25512239">
        <id>Q9ZR37</id>
        <label>DSPTP1</label>
    </interactant>
    <organismsDiffer>false</organismsDiffer>
    <experiments>3</experiments>
</comment>
<comment type="interaction">
    <interactant intactId="EBI-15204858">
        <id>Q9FMC8</id>
    </interactant>
    <interactant intactId="EBI-4426127">
        <id>Q8GXL7</id>
        <label>GATA24</label>
    </interactant>
    <organismsDiffer>false</organismsDiffer>
    <experiments>4</experiments>
</comment>
<comment type="interaction">
    <interactant intactId="EBI-15204858">
        <id>Q9FMC8</id>
    </interactant>
    <interactant intactId="EBI-4435064">
        <id>Q8H1G0</id>
        <label>GATA28</label>
    </interactant>
    <organismsDiffer>false</organismsDiffer>
    <experiments>4</experiments>
</comment>
<comment type="interaction">
    <interactant intactId="EBI-15204858">
        <id>Q9FMC8</id>
    </interactant>
    <interactant intactId="EBI-15198195">
        <id>Q8GYY1</id>
        <label>HSFA3</label>
    </interactant>
    <organismsDiffer>false</organismsDiffer>
    <experiments>3</experiments>
</comment>
<comment type="subcellular location">
    <subcellularLocation>
        <location evidence="1">Nucleus</location>
    </subcellularLocation>
</comment>
<comment type="tissue specificity">
    <text evidence="3">Expressed in roots, rosette and cauline leaves, shoots, stems, flower buds and siliques.</text>
</comment>
<comment type="miscellaneous">
    <text evidence="4">Plants over-expressing OFP13 show small rosette size, late flowering, reduced fertilization and blunt-end siliques.</text>
</comment>
<name>OPF13_ARATH</name>
<feature type="chain" id="PRO_0000429682" description="Transcription repressor OFP13">
    <location>
        <begin position="1"/>
        <end position="260"/>
    </location>
</feature>
<feature type="domain" description="OVATE" evidence="2">
    <location>
        <begin position="150"/>
        <end position="211"/>
    </location>
</feature>
<accession>Q9FMC8</accession>
<gene>
    <name type="primary">OFP13</name>
    <name type="ordered locus">At5g04820</name>
    <name type="ORF">MUK11.14</name>
</gene>
<reference key="1">
    <citation type="journal article" date="1997" name="DNA Res.">
        <title>Structural analysis of Arabidopsis thaliana chromosome 5. III. Sequence features of the regions of 1,191,918 bp covered by seventeen physically assigned P1 clones.</title>
        <authorList>
            <person name="Nakamura Y."/>
            <person name="Sato S."/>
            <person name="Kaneko T."/>
            <person name="Kotani H."/>
            <person name="Asamizu E."/>
            <person name="Miyajima N."/>
            <person name="Tabata S."/>
        </authorList>
    </citation>
    <scope>NUCLEOTIDE SEQUENCE [LARGE SCALE GENOMIC DNA]</scope>
    <source>
        <strain>cv. Columbia</strain>
    </source>
</reference>
<reference key="2">
    <citation type="journal article" date="2017" name="Plant J.">
        <title>Araport11: a complete reannotation of the Arabidopsis thaliana reference genome.</title>
        <authorList>
            <person name="Cheng C.Y."/>
            <person name="Krishnakumar V."/>
            <person name="Chan A.P."/>
            <person name="Thibaud-Nissen F."/>
            <person name="Schobel S."/>
            <person name="Town C.D."/>
        </authorList>
    </citation>
    <scope>GENOME REANNOTATION</scope>
    <source>
        <strain>cv. Columbia</strain>
    </source>
</reference>
<reference key="3">
    <citation type="journal article" date="2003" name="Science">
        <title>Empirical analysis of transcriptional activity in the Arabidopsis genome.</title>
        <authorList>
            <person name="Yamada K."/>
            <person name="Lim J."/>
            <person name="Dale J.M."/>
            <person name="Chen H."/>
            <person name="Shinn P."/>
            <person name="Palm C.J."/>
            <person name="Southwick A.M."/>
            <person name="Wu H.C."/>
            <person name="Kim C.J."/>
            <person name="Nguyen M."/>
            <person name="Pham P.K."/>
            <person name="Cheuk R.F."/>
            <person name="Karlin-Newmann G."/>
            <person name="Liu S.X."/>
            <person name="Lam B."/>
            <person name="Sakano H."/>
            <person name="Wu T."/>
            <person name="Yu G."/>
            <person name="Miranda M."/>
            <person name="Quach H.L."/>
            <person name="Tripp M."/>
            <person name="Chang C.H."/>
            <person name="Lee J.M."/>
            <person name="Toriumi M.J."/>
            <person name="Chan M.M."/>
            <person name="Tang C.C."/>
            <person name="Onodera C.S."/>
            <person name="Deng J.M."/>
            <person name="Akiyama K."/>
            <person name="Ansari Y."/>
            <person name="Arakawa T."/>
            <person name="Banh J."/>
            <person name="Banno F."/>
            <person name="Bowser L."/>
            <person name="Brooks S.Y."/>
            <person name="Carninci P."/>
            <person name="Chao Q."/>
            <person name="Choy N."/>
            <person name="Enju A."/>
            <person name="Goldsmith A.D."/>
            <person name="Gurjal M."/>
            <person name="Hansen N.F."/>
            <person name="Hayashizaki Y."/>
            <person name="Johnson-Hopson C."/>
            <person name="Hsuan V.W."/>
            <person name="Iida K."/>
            <person name="Karnes M."/>
            <person name="Khan S."/>
            <person name="Koesema E."/>
            <person name="Ishida J."/>
            <person name="Jiang P.X."/>
            <person name="Jones T."/>
            <person name="Kawai J."/>
            <person name="Kamiya A."/>
            <person name="Meyers C."/>
            <person name="Nakajima M."/>
            <person name="Narusaka M."/>
            <person name="Seki M."/>
            <person name="Sakurai T."/>
            <person name="Satou M."/>
            <person name="Tamse R."/>
            <person name="Vaysberg M."/>
            <person name="Wallender E.K."/>
            <person name="Wong C."/>
            <person name="Yamamura Y."/>
            <person name="Yuan S."/>
            <person name="Shinozaki K."/>
            <person name="Davis R.W."/>
            <person name="Theologis A."/>
            <person name="Ecker J.R."/>
        </authorList>
    </citation>
    <scope>NUCLEOTIDE SEQUENCE [LARGE SCALE MRNA]</scope>
    <source>
        <strain>cv. Columbia</strain>
    </source>
</reference>
<reference key="4">
    <citation type="submission" date="2002-03" db="EMBL/GenBank/DDBJ databases">
        <title>Full-length cDNA from Arabidopsis thaliana.</title>
        <authorList>
            <person name="Brover V.V."/>
            <person name="Troukhan M.E."/>
            <person name="Alexandrov N.A."/>
            <person name="Lu Y.-P."/>
            <person name="Flavell R.B."/>
            <person name="Feldmann K.A."/>
        </authorList>
    </citation>
    <scope>NUCLEOTIDE SEQUENCE [LARGE SCALE MRNA]</scope>
</reference>
<reference key="5">
    <citation type="journal article" date="2011" name="PLoS ONE">
        <title>Arabidopsis ovate family proteins, a novel transcriptional repressor family, control multiple aspects of plant growth and development.</title>
        <authorList>
            <person name="Wang S."/>
            <person name="Chang Y."/>
            <person name="Guo J."/>
            <person name="Zeng Q."/>
            <person name="Ellis B.E."/>
            <person name="Chen J.G."/>
        </authorList>
    </citation>
    <scope>FUNCTION</scope>
    <scope>TISSUE SPECIFICITY</scope>
    <scope>GENE FAMILY</scope>
</reference>
<keyword id="KW-0539">Nucleus</keyword>
<keyword id="KW-1185">Reference proteome</keyword>
<keyword id="KW-0678">Repressor</keyword>
<keyword id="KW-0804">Transcription</keyword>
<keyword id="KW-0805">Transcription regulation</keyword>
<dbReference type="EMBL" id="AB008271">
    <property type="protein sequence ID" value="BAB08986.1"/>
    <property type="molecule type" value="Genomic_DNA"/>
</dbReference>
<dbReference type="EMBL" id="CP002688">
    <property type="protein sequence ID" value="AED90790.1"/>
    <property type="molecule type" value="Genomic_DNA"/>
</dbReference>
<dbReference type="EMBL" id="AY065447">
    <property type="protein sequence ID" value="AAL38888.1"/>
    <property type="molecule type" value="mRNA"/>
</dbReference>
<dbReference type="EMBL" id="AY117279">
    <property type="protein sequence ID" value="AAM51354.1"/>
    <property type="molecule type" value="mRNA"/>
</dbReference>
<dbReference type="EMBL" id="AY084744">
    <property type="protein sequence ID" value="AAM61315.1"/>
    <property type="molecule type" value="mRNA"/>
</dbReference>
<dbReference type="RefSeq" id="NP_196102.1">
    <property type="nucleotide sequence ID" value="NM_120564.2"/>
</dbReference>
<dbReference type="BioGRID" id="15640">
    <property type="interactions" value="19"/>
</dbReference>
<dbReference type="FunCoup" id="Q9FMC8">
    <property type="interactions" value="213"/>
</dbReference>
<dbReference type="IntAct" id="Q9FMC8">
    <property type="interactions" value="19"/>
</dbReference>
<dbReference type="STRING" id="3702.Q9FMC8"/>
<dbReference type="PaxDb" id="3702-AT5G04820.1"/>
<dbReference type="EnsemblPlants" id="AT5G04820.1">
    <property type="protein sequence ID" value="AT5G04820.1"/>
    <property type="gene ID" value="AT5G04820"/>
</dbReference>
<dbReference type="GeneID" id="830361"/>
<dbReference type="Gramene" id="AT5G04820.1">
    <property type="protein sequence ID" value="AT5G04820.1"/>
    <property type="gene ID" value="AT5G04820"/>
</dbReference>
<dbReference type="KEGG" id="ath:AT5G04820"/>
<dbReference type="Araport" id="AT5G04820"/>
<dbReference type="TAIR" id="AT5G04820">
    <property type="gene designation" value="OFP13"/>
</dbReference>
<dbReference type="eggNOG" id="ENOG502RFQ4">
    <property type="taxonomic scope" value="Eukaryota"/>
</dbReference>
<dbReference type="HOGENOM" id="CLU_066339_1_1_1"/>
<dbReference type="InParanoid" id="Q9FMC8"/>
<dbReference type="OMA" id="RNNHGFI"/>
<dbReference type="PhylomeDB" id="Q9FMC8"/>
<dbReference type="PRO" id="PR:Q9FMC8"/>
<dbReference type="Proteomes" id="UP000006548">
    <property type="component" value="Chromosome 5"/>
</dbReference>
<dbReference type="ExpressionAtlas" id="Q9FMC8">
    <property type="expression patterns" value="baseline and differential"/>
</dbReference>
<dbReference type="GO" id="GO:0005634">
    <property type="term" value="C:nucleus"/>
    <property type="evidence" value="ECO:0007669"/>
    <property type="project" value="UniProtKB-SubCell"/>
</dbReference>
<dbReference type="GO" id="GO:0045892">
    <property type="term" value="P:negative regulation of DNA-templated transcription"/>
    <property type="evidence" value="ECO:0000314"/>
    <property type="project" value="TAIR"/>
</dbReference>
<dbReference type="InterPro" id="IPR038933">
    <property type="entry name" value="Ovate"/>
</dbReference>
<dbReference type="InterPro" id="IPR006458">
    <property type="entry name" value="Ovate_C"/>
</dbReference>
<dbReference type="NCBIfam" id="TIGR01568">
    <property type="entry name" value="A_thal_3678"/>
    <property type="match status" value="1"/>
</dbReference>
<dbReference type="PANTHER" id="PTHR33057:SF26">
    <property type="entry name" value="TRANSCRIPTION REPRESSOR OFP13"/>
    <property type="match status" value="1"/>
</dbReference>
<dbReference type="PANTHER" id="PTHR33057">
    <property type="entry name" value="TRANSCRIPTION REPRESSOR OFP7-RELATED"/>
    <property type="match status" value="1"/>
</dbReference>
<dbReference type="Pfam" id="PF04844">
    <property type="entry name" value="Ovate"/>
    <property type="match status" value="1"/>
</dbReference>
<dbReference type="PROSITE" id="PS51754">
    <property type="entry name" value="OVATE"/>
    <property type="match status" value="1"/>
</dbReference>